<organism>
    <name type="scientific">Shewanella sp. (strain MR-4)</name>
    <dbReference type="NCBI Taxonomy" id="60480"/>
    <lineage>
        <taxon>Bacteria</taxon>
        <taxon>Pseudomonadati</taxon>
        <taxon>Pseudomonadota</taxon>
        <taxon>Gammaproteobacteria</taxon>
        <taxon>Alteromonadales</taxon>
        <taxon>Shewanellaceae</taxon>
        <taxon>Shewanella</taxon>
    </lineage>
</organism>
<reference key="1">
    <citation type="submission" date="2006-08" db="EMBL/GenBank/DDBJ databases">
        <title>Complete sequence of Shewanella sp. MR-4.</title>
        <authorList>
            <consortium name="US DOE Joint Genome Institute"/>
            <person name="Copeland A."/>
            <person name="Lucas S."/>
            <person name="Lapidus A."/>
            <person name="Barry K."/>
            <person name="Detter J.C."/>
            <person name="Glavina del Rio T."/>
            <person name="Hammon N."/>
            <person name="Israni S."/>
            <person name="Dalin E."/>
            <person name="Tice H."/>
            <person name="Pitluck S."/>
            <person name="Kiss H."/>
            <person name="Brettin T."/>
            <person name="Bruce D."/>
            <person name="Han C."/>
            <person name="Tapia R."/>
            <person name="Gilna P."/>
            <person name="Schmutz J."/>
            <person name="Larimer F."/>
            <person name="Land M."/>
            <person name="Hauser L."/>
            <person name="Kyrpides N."/>
            <person name="Mikhailova N."/>
            <person name="Nealson K."/>
            <person name="Konstantinidis K."/>
            <person name="Klappenbach J."/>
            <person name="Tiedje J."/>
            <person name="Richardson P."/>
        </authorList>
    </citation>
    <scope>NUCLEOTIDE SEQUENCE [LARGE SCALE GENOMIC DNA]</scope>
    <source>
        <strain>MR-4</strain>
    </source>
</reference>
<comment type="function">
    <text evidence="1">Catalyzes the reduction of the glycolytic intermediate dihydroxyacetone phosphate (DHAP) to sn-glycerol 3-phosphate (G3P), the key precursor for phospholipid synthesis.</text>
</comment>
<comment type="catalytic activity">
    <reaction evidence="1">
        <text>sn-glycerol 3-phosphate + NAD(+) = dihydroxyacetone phosphate + NADH + H(+)</text>
        <dbReference type="Rhea" id="RHEA:11092"/>
        <dbReference type="ChEBI" id="CHEBI:15378"/>
        <dbReference type="ChEBI" id="CHEBI:57540"/>
        <dbReference type="ChEBI" id="CHEBI:57597"/>
        <dbReference type="ChEBI" id="CHEBI:57642"/>
        <dbReference type="ChEBI" id="CHEBI:57945"/>
        <dbReference type="EC" id="1.1.1.94"/>
    </reaction>
    <physiologicalReaction direction="right-to-left" evidence="1">
        <dbReference type="Rhea" id="RHEA:11094"/>
    </physiologicalReaction>
</comment>
<comment type="catalytic activity">
    <reaction evidence="1">
        <text>sn-glycerol 3-phosphate + NADP(+) = dihydroxyacetone phosphate + NADPH + H(+)</text>
        <dbReference type="Rhea" id="RHEA:11096"/>
        <dbReference type="ChEBI" id="CHEBI:15378"/>
        <dbReference type="ChEBI" id="CHEBI:57597"/>
        <dbReference type="ChEBI" id="CHEBI:57642"/>
        <dbReference type="ChEBI" id="CHEBI:57783"/>
        <dbReference type="ChEBI" id="CHEBI:58349"/>
        <dbReference type="EC" id="1.1.1.94"/>
    </reaction>
    <physiologicalReaction direction="right-to-left" evidence="1">
        <dbReference type="Rhea" id="RHEA:11098"/>
    </physiologicalReaction>
</comment>
<comment type="pathway">
    <text evidence="1">Membrane lipid metabolism; glycerophospholipid metabolism.</text>
</comment>
<comment type="subcellular location">
    <subcellularLocation>
        <location evidence="1">Cytoplasm</location>
    </subcellularLocation>
</comment>
<comment type="similarity">
    <text evidence="1">Belongs to the NAD-dependent glycerol-3-phosphate dehydrogenase family.</text>
</comment>
<evidence type="ECO:0000255" key="1">
    <source>
        <dbReference type="HAMAP-Rule" id="MF_00394"/>
    </source>
</evidence>
<keyword id="KW-0963">Cytoplasm</keyword>
<keyword id="KW-0444">Lipid biosynthesis</keyword>
<keyword id="KW-0443">Lipid metabolism</keyword>
<keyword id="KW-0520">NAD</keyword>
<keyword id="KW-0521">NADP</keyword>
<keyword id="KW-0547">Nucleotide-binding</keyword>
<keyword id="KW-0560">Oxidoreductase</keyword>
<keyword id="KW-0594">Phospholipid biosynthesis</keyword>
<keyword id="KW-1208">Phospholipid metabolism</keyword>
<dbReference type="EC" id="1.1.1.94" evidence="1"/>
<dbReference type="EMBL" id="CP000446">
    <property type="protein sequence ID" value="ABI37129.1"/>
    <property type="molecule type" value="Genomic_DNA"/>
</dbReference>
<dbReference type="RefSeq" id="WP_011620883.1">
    <property type="nucleotide sequence ID" value="NC_008321.1"/>
</dbReference>
<dbReference type="SMR" id="Q0HP88"/>
<dbReference type="GeneID" id="75186542"/>
<dbReference type="KEGG" id="she:Shewmr4_0048"/>
<dbReference type="HOGENOM" id="CLU_033449_0_2_6"/>
<dbReference type="UniPathway" id="UPA00940"/>
<dbReference type="GO" id="GO:0005829">
    <property type="term" value="C:cytosol"/>
    <property type="evidence" value="ECO:0007669"/>
    <property type="project" value="TreeGrafter"/>
</dbReference>
<dbReference type="GO" id="GO:0047952">
    <property type="term" value="F:glycerol-3-phosphate dehydrogenase [NAD(P)+] activity"/>
    <property type="evidence" value="ECO:0007669"/>
    <property type="project" value="UniProtKB-UniRule"/>
</dbReference>
<dbReference type="GO" id="GO:0051287">
    <property type="term" value="F:NAD binding"/>
    <property type="evidence" value="ECO:0007669"/>
    <property type="project" value="InterPro"/>
</dbReference>
<dbReference type="GO" id="GO:0005975">
    <property type="term" value="P:carbohydrate metabolic process"/>
    <property type="evidence" value="ECO:0007669"/>
    <property type="project" value="InterPro"/>
</dbReference>
<dbReference type="GO" id="GO:0046167">
    <property type="term" value="P:glycerol-3-phosphate biosynthetic process"/>
    <property type="evidence" value="ECO:0007669"/>
    <property type="project" value="UniProtKB-UniRule"/>
</dbReference>
<dbReference type="GO" id="GO:0046168">
    <property type="term" value="P:glycerol-3-phosphate catabolic process"/>
    <property type="evidence" value="ECO:0007669"/>
    <property type="project" value="InterPro"/>
</dbReference>
<dbReference type="GO" id="GO:0046474">
    <property type="term" value="P:glycerophospholipid biosynthetic process"/>
    <property type="evidence" value="ECO:0007669"/>
    <property type="project" value="TreeGrafter"/>
</dbReference>
<dbReference type="FunFam" id="1.10.1040.10:FF:000001">
    <property type="entry name" value="Glycerol-3-phosphate dehydrogenase [NAD(P)+]"/>
    <property type="match status" value="1"/>
</dbReference>
<dbReference type="FunFam" id="3.40.50.720:FF:000019">
    <property type="entry name" value="Glycerol-3-phosphate dehydrogenase [NAD(P)+]"/>
    <property type="match status" value="1"/>
</dbReference>
<dbReference type="Gene3D" id="1.10.1040.10">
    <property type="entry name" value="N-(1-d-carboxylethyl)-l-norvaline Dehydrogenase, domain 2"/>
    <property type="match status" value="1"/>
</dbReference>
<dbReference type="Gene3D" id="3.40.50.720">
    <property type="entry name" value="NAD(P)-binding Rossmann-like Domain"/>
    <property type="match status" value="1"/>
</dbReference>
<dbReference type="HAMAP" id="MF_00394">
    <property type="entry name" value="NAD_Glyc3P_dehydrog"/>
    <property type="match status" value="1"/>
</dbReference>
<dbReference type="InterPro" id="IPR008927">
    <property type="entry name" value="6-PGluconate_DH-like_C_sf"/>
</dbReference>
<dbReference type="InterPro" id="IPR013328">
    <property type="entry name" value="6PGD_dom2"/>
</dbReference>
<dbReference type="InterPro" id="IPR006168">
    <property type="entry name" value="G3P_DH_NAD-dep"/>
</dbReference>
<dbReference type="InterPro" id="IPR006109">
    <property type="entry name" value="G3P_DH_NAD-dep_C"/>
</dbReference>
<dbReference type="InterPro" id="IPR011128">
    <property type="entry name" value="G3P_DH_NAD-dep_N"/>
</dbReference>
<dbReference type="InterPro" id="IPR036291">
    <property type="entry name" value="NAD(P)-bd_dom_sf"/>
</dbReference>
<dbReference type="NCBIfam" id="NF000939">
    <property type="entry name" value="PRK00094.1-1"/>
    <property type="match status" value="1"/>
</dbReference>
<dbReference type="NCBIfam" id="NF000940">
    <property type="entry name" value="PRK00094.1-2"/>
    <property type="match status" value="1"/>
</dbReference>
<dbReference type="NCBIfam" id="NF000942">
    <property type="entry name" value="PRK00094.1-4"/>
    <property type="match status" value="1"/>
</dbReference>
<dbReference type="PANTHER" id="PTHR11728">
    <property type="entry name" value="GLYCEROL-3-PHOSPHATE DEHYDROGENASE"/>
    <property type="match status" value="1"/>
</dbReference>
<dbReference type="PANTHER" id="PTHR11728:SF1">
    <property type="entry name" value="GLYCEROL-3-PHOSPHATE DEHYDROGENASE [NAD(+)] 2, CHLOROPLASTIC"/>
    <property type="match status" value="1"/>
</dbReference>
<dbReference type="Pfam" id="PF07479">
    <property type="entry name" value="NAD_Gly3P_dh_C"/>
    <property type="match status" value="1"/>
</dbReference>
<dbReference type="Pfam" id="PF01210">
    <property type="entry name" value="NAD_Gly3P_dh_N"/>
    <property type="match status" value="1"/>
</dbReference>
<dbReference type="PIRSF" id="PIRSF000114">
    <property type="entry name" value="Glycerol-3-P_dh"/>
    <property type="match status" value="1"/>
</dbReference>
<dbReference type="PRINTS" id="PR00077">
    <property type="entry name" value="GPDHDRGNASE"/>
</dbReference>
<dbReference type="SUPFAM" id="SSF48179">
    <property type="entry name" value="6-phosphogluconate dehydrogenase C-terminal domain-like"/>
    <property type="match status" value="1"/>
</dbReference>
<dbReference type="SUPFAM" id="SSF51735">
    <property type="entry name" value="NAD(P)-binding Rossmann-fold domains"/>
    <property type="match status" value="1"/>
</dbReference>
<dbReference type="PROSITE" id="PS00957">
    <property type="entry name" value="NAD_G3PDH"/>
    <property type="match status" value="1"/>
</dbReference>
<gene>
    <name evidence="1" type="primary">gpsA</name>
    <name type="ordered locus">Shewmr4_0048</name>
</gene>
<sequence>MKNSADITVLGAGSYGTALAISLASNGHKTLLWGHDPAHMQTLAQDKCNQAFLPGIAFPECLHIEADLAKALAASNNVLVVVPSHVFGSVLAQAKPLLRQDARIVWATKGLEPETGRLLQDVARDVLGEQYPLAVLSGPTFAKELAMGLPTAISVAGTCPKFTAELVELLHSPKRLRVYANDDFIGLQLGGAVKNVIAIGAGMSDGIGFGANARTALITRGLVELTRLGEALGASTATFMGMAGLGDLVLTCTDNQSRNRRFGLALGKGCDVDTAQAEIGQVVEGYRNTKEVFTLAKRMGVEMPITEQIYQVLYQGKAPLDAAKELLSREKKSETPAQ</sequence>
<protein>
    <recommendedName>
        <fullName evidence="1">Glycerol-3-phosphate dehydrogenase [NAD(P)+]</fullName>
        <ecNumber evidence="1">1.1.1.94</ecNumber>
    </recommendedName>
    <alternativeName>
        <fullName evidence="1">NAD(P)(+)-dependent glycerol-3-phosphate dehydrogenase</fullName>
    </alternativeName>
    <alternativeName>
        <fullName evidence="1">NAD(P)H-dependent dihydroxyacetone-phosphate reductase</fullName>
    </alternativeName>
</protein>
<name>GPDA_SHESM</name>
<proteinExistence type="inferred from homology"/>
<feature type="chain" id="PRO_1000049554" description="Glycerol-3-phosphate dehydrogenase [NAD(P)+]">
    <location>
        <begin position="1"/>
        <end position="338"/>
    </location>
</feature>
<feature type="active site" description="Proton acceptor" evidence="1">
    <location>
        <position position="194"/>
    </location>
</feature>
<feature type="binding site" evidence="1">
    <location>
        <position position="14"/>
    </location>
    <ligand>
        <name>NADPH</name>
        <dbReference type="ChEBI" id="CHEBI:57783"/>
    </ligand>
</feature>
<feature type="binding site" evidence="1">
    <location>
        <position position="15"/>
    </location>
    <ligand>
        <name>NADPH</name>
        <dbReference type="ChEBI" id="CHEBI:57783"/>
    </ligand>
</feature>
<feature type="binding site" evidence="1">
    <location>
        <position position="35"/>
    </location>
    <ligand>
        <name>NADPH</name>
        <dbReference type="ChEBI" id="CHEBI:57783"/>
    </ligand>
</feature>
<feature type="binding site" evidence="1">
    <location>
        <position position="109"/>
    </location>
    <ligand>
        <name>NADPH</name>
        <dbReference type="ChEBI" id="CHEBI:57783"/>
    </ligand>
</feature>
<feature type="binding site" evidence="1">
    <location>
        <position position="109"/>
    </location>
    <ligand>
        <name>sn-glycerol 3-phosphate</name>
        <dbReference type="ChEBI" id="CHEBI:57597"/>
    </ligand>
</feature>
<feature type="binding site" evidence="1">
    <location>
        <position position="138"/>
    </location>
    <ligand>
        <name>sn-glycerol 3-phosphate</name>
        <dbReference type="ChEBI" id="CHEBI:57597"/>
    </ligand>
</feature>
<feature type="binding site" evidence="1">
    <location>
        <position position="140"/>
    </location>
    <ligand>
        <name>sn-glycerol 3-phosphate</name>
        <dbReference type="ChEBI" id="CHEBI:57597"/>
    </ligand>
</feature>
<feature type="binding site" evidence="1">
    <location>
        <position position="142"/>
    </location>
    <ligand>
        <name>NADPH</name>
        <dbReference type="ChEBI" id="CHEBI:57783"/>
    </ligand>
</feature>
<feature type="binding site" evidence="1">
    <location>
        <position position="194"/>
    </location>
    <ligand>
        <name>sn-glycerol 3-phosphate</name>
        <dbReference type="ChEBI" id="CHEBI:57597"/>
    </ligand>
</feature>
<feature type="binding site" evidence="1">
    <location>
        <position position="247"/>
    </location>
    <ligand>
        <name>sn-glycerol 3-phosphate</name>
        <dbReference type="ChEBI" id="CHEBI:57597"/>
    </ligand>
</feature>
<feature type="binding site" evidence="1">
    <location>
        <position position="257"/>
    </location>
    <ligand>
        <name>sn-glycerol 3-phosphate</name>
        <dbReference type="ChEBI" id="CHEBI:57597"/>
    </ligand>
</feature>
<feature type="binding site" evidence="1">
    <location>
        <position position="258"/>
    </location>
    <ligand>
        <name>NADPH</name>
        <dbReference type="ChEBI" id="CHEBI:57783"/>
    </ligand>
</feature>
<feature type="binding site" evidence="1">
    <location>
        <position position="258"/>
    </location>
    <ligand>
        <name>sn-glycerol 3-phosphate</name>
        <dbReference type="ChEBI" id="CHEBI:57597"/>
    </ligand>
</feature>
<feature type="binding site" evidence="1">
    <location>
        <position position="259"/>
    </location>
    <ligand>
        <name>sn-glycerol 3-phosphate</name>
        <dbReference type="ChEBI" id="CHEBI:57597"/>
    </ligand>
</feature>
<feature type="binding site" evidence="1">
    <location>
        <position position="282"/>
    </location>
    <ligand>
        <name>NADPH</name>
        <dbReference type="ChEBI" id="CHEBI:57783"/>
    </ligand>
</feature>
<feature type="binding site" evidence="1">
    <location>
        <position position="284"/>
    </location>
    <ligand>
        <name>NADPH</name>
        <dbReference type="ChEBI" id="CHEBI:57783"/>
    </ligand>
</feature>
<accession>Q0HP88</accession>